<accession>Q0KIY9</accession>
<gene>
    <name type="primary">MB</name>
</gene>
<protein>
    <recommendedName>
        <fullName>Myoglobin</fullName>
    </recommendedName>
    <alternativeName>
        <fullName evidence="1">Nitrite reductase MB</fullName>
        <ecNumber evidence="1">1.7.-.-</ecNumber>
    </alternativeName>
    <alternativeName>
        <fullName evidence="1">Pseudoperoxidase MB</fullName>
        <ecNumber evidence="1">1.11.1.-</ecNumber>
    </alternativeName>
</protein>
<feature type="chain" id="PRO_0000261579" description="Myoglobin">
    <location>
        <begin position="1"/>
        <end position="154"/>
    </location>
</feature>
<feature type="domain" description="Globin" evidence="7">
    <location>
        <begin position="2"/>
        <end position="148"/>
    </location>
</feature>
<feature type="binding site" evidence="5">
    <location>
        <position position="65"/>
    </location>
    <ligand>
        <name>nitrite</name>
        <dbReference type="ChEBI" id="CHEBI:16301"/>
    </ligand>
</feature>
<feature type="binding site" evidence="3 7">
    <location>
        <position position="65"/>
    </location>
    <ligand>
        <name>O2</name>
        <dbReference type="ChEBI" id="CHEBI:15379"/>
    </ligand>
</feature>
<feature type="binding site" description="proximal binding residue" evidence="1">
    <location>
        <position position="94"/>
    </location>
    <ligand>
        <name>heme b</name>
        <dbReference type="ChEBI" id="CHEBI:60344"/>
    </ligand>
    <ligandPart>
        <name>Fe</name>
        <dbReference type="ChEBI" id="CHEBI:18248"/>
    </ligandPart>
</feature>
<feature type="modified residue" description="Phosphoserine" evidence="6">
    <location>
        <position position="4"/>
    </location>
</feature>
<feature type="modified residue" description="Phosphothreonine" evidence="4">
    <location>
        <position position="68"/>
    </location>
</feature>
<dbReference type="EC" id="1.7.-.-" evidence="1"/>
<dbReference type="EC" id="1.11.1.-" evidence="1"/>
<dbReference type="EMBL" id="AB271143">
    <property type="protein sequence ID" value="BAF03578.1"/>
    <property type="molecule type" value="mRNA"/>
</dbReference>
<dbReference type="SMR" id="Q0KIY9"/>
<dbReference type="GO" id="GO:0070062">
    <property type="term" value="C:extracellular exosome"/>
    <property type="evidence" value="ECO:0007669"/>
    <property type="project" value="TreeGrafter"/>
</dbReference>
<dbReference type="GO" id="GO:0016528">
    <property type="term" value="C:sarcoplasm"/>
    <property type="evidence" value="ECO:0000250"/>
    <property type="project" value="UniProtKB"/>
</dbReference>
<dbReference type="GO" id="GO:0020037">
    <property type="term" value="F:heme binding"/>
    <property type="evidence" value="ECO:0007669"/>
    <property type="project" value="InterPro"/>
</dbReference>
<dbReference type="GO" id="GO:0046872">
    <property type="term" value="F:metal ion binding"/>
    <property type="evidence" value="ECO:0007669"/>
    <property type="project" value="UniProtKB-KW"/>
</dbReference>
<dbReference type="GO" id="GO:0098809">
    <property type="term" value="F:nitrite reductase activity"/>
    <property type="evidence" value="ECO:0000250"/>
    <property type="project" value="UniProtKB"/>
</dbReference>
<dbReference type="GO" id="GO:0019825">
    <property type="term" value="F:oxygen binding"/>
    <property type="evidence" value="ECO:0007669"/>
    <property type="project" value="InterPro"/>
</dbReference>
<dbReference type="GO" id="GO:0005344">
    <property type="term" value="F:oxygen carrier activity"/>
    <property type="evidence" value="ECO:0000250"/>
    <property type="project" value="UniProtKB"/>
</dbReference>
<dbReference type="GO" id="GO:0004601">
    <property type="term" value="F:peroxidase activity"/>
    <property type="evidence" value="ECO:0000250"/>
    <property type="project" value="UniProtKB"/>
</dbReference>
<dbReference type="GO" id="GO:0019430">
    <property type="term" value="P:removal of superoxide radicals"/>
    <property type="evidence" value="ECO:0000250"/>
    <property type="project" value="UniProtKB"/>
</dbReference>
<dbReference type="Gene3D" id="6.10.140.2100">
    <property type="match status" value="1"/>
</dbReference>
<dbReference type="Gene3D" id="6.10.140.2110">
    <property type="match status" value="1"/>
</dbReference>
<dbReference type="InterPro" id="IPR000971">
    <property type="entry name" value="Globin"/>
</dbReference>
<dbReference type="InterPro" id="IPR009050">
    <property type="entry name" value="Globin-like_sf"/>
</dbReference>
<dbReference type="InterPro" id="IPR002335">
    <property type="entry name" value="Myoglobin"/>
</dbReference>
<dbReference type="PANTHER" id="PTHR47132">
    <property type="entry name" value="MYOGLOBIN"/>
    <property type="match status" value="1"/>
</dbReference>
<dbReference type="PANTHER" id="PTHR47132:SF1">
    <property type="entry name" value="MYOGLOBIN"/>
    <property type="match status" value="1"/>
</dbReference>
<dbReference type="Pfam" id="PF00042">
    <property type="entry name" value="Globin"/>
    <property type="match status" value="1"/>
</dbReference>
<dbReference type="PRINTS" id="PR00613">
    <property type="entry name" value="MYOGLOBIN"/>
</dbReference>
<dbReference type="SUPFAM" id="SSF46458">
    <property type="entry name" value="Globin-like"/>
    <property type="match status" value="1"/>
</dbReference>
<dbReference type="PROSITE" id="PS01033">
    <property type="entry name" value="GLOBIN"/>
    <property type="match status" value="1"/>
</dbReference>
<name>MYG_INDPC</name>
<evidence type="ECO:0000250" key="1">
    <source>
        <dbReference type="UniProtKB" id="P02144"/>
    </source>
</evidence>
<evidence type="ECO:0000250" key="2">
    <source>
        <dbReference type="UniProtKB" id="P02185"/>
    </source>
</evidence>
<evidence type="ECO:0000250" key="3">
    <source>
        <dbReference type="UniProtKB" id="P02189"/>
    </source>
</evidence>
<evidence type="ECO:0000250" key="4">
    <source>
        <dbReference type="UniProtKB" id="P04247"/>
    </source>
</evidence>
<evidence type="ECO:0000250" key="5">
    <source>
        <dbReference type="UniProtKB" id="P68082"/>
    </source>
</evidence>
<evidence type="ECO:0000250" key="6">
    <source>
        <dbReference type="UniProtKB" id="Q9QZ76"/>
    </source>
</evidence>
<evidence type="ECO:0000255" key="7">
    <source>
        <dbReference type="PROSITE-ProRule" id="PRU00238"/>
    </source>
</evidence>
<organism>
    <name type="scientific">Indopacetus pacificus</name>
    <name type="common">Longman's beaked whale</name>
    <name type="synonym">Mesoplodon pacificus</name>
    <dbReference type="NCBI Taxonomy" id="221924"/>
    <lineage>
        <taxon>Eukaryota</taxon>
        <taxon>Metazoa</taxon>
        <taxon>Chordata</taxon>
        <taxon>Craniata</taxon>
        <taxon>Vertebrata</taxon>
        <taxon>Euteleostomi</taxon>
        <taxon>Mammalia</taxon>
        <taxon>Eutheria</taxon>
        <taxon>Laurasiatheria</taxon>
        <taxon>Artiodactyla</taxon>
        <taxon>Whippomorpha</taxon>
        <taxon>Cetacea</taxon>
        <taxon>Odontoceti</taxon>
        <taxon>Ziphiidae</taxon>
        <taxon>Indopacetus</taxon>
    </lineage>
</organism>
<proteinExistence type="evidence at transcript level"/>
<reference key="1">
    <citation type="journal article" date="2006" name="Comp. Biochem. Physiol.">
        <title>cDNA-derived amino acid sequences of myoglobins from nine species of whales and dolphins.</title>
        <authorList>
            <person name="Iwanami K."/>
            <person name="Mita H."/>
            <person name="Yamamoto Y."/>
            <person name="Fujise Y."/>
            <person name="Yamada T."/>
            <person name="Suzuki T."/>
        </authorList>
    </citation>
    <scope>NUCLEOTIDE SEQUENCE [MRNA]</scope>
</reference>
<sequence>MGLSEAEWQLVLHVWAKVEADLSGHGQEILIRLFKGHPETLEKFDKFKHLKSEAEMKASEDLKKHGHTVLTALGGILKKKGHHEAELKPLAQSHATKHKIPIKYLEFISDAIIHVLHSKHPSDFGADAQAAMTKALELFRKDIAAKYKELGFHG</sequence>
<comment type="function">
    <text evidence="1">Monomeric heme protein which primary function is to store oxygen and facilitate its diffusion within muscle tissues. Reversibly binds oxygen through a pentacoordinated heme iron and enables its timely and efficient release as needed during periods of heightened demand. Depending on the oxidative conditions of tissues and cells, and in addition to its ability to bind oxygen, it also has a nitrite reductase activity whereby it regulates the production of bioactive nitric oxide. Under stress conditions, like hypoxia and anoxia, it also protects cells against reactive oxygen species thanks to its pseudoperoxidase activity.</text>
</comment>
<comment type="catalytic activity">
    <reaction evidence="1">
        <text>Fe(III)-heme b-[protein] + nitric oxide + H2O = Fe(II)-heme b-[protein] + nitrite + 2 H(+)</text>
        <dbReference type="Rhea" id="RHEA:77711"/>
        <dbReference type="Rhea" id="RHEA-COMP:18975"/>
        <dbReference type="Rhea" id="RHEA-COMP:18976"/>
        <dbReference type="ChEBI" id="CHEBI:15377"/>
        <dbReference type="ChEBI" id="CHEBI:15378"/>
        <dbReference type="ChEBI" id="CHEBI:16301"/>
        <dbReference type="ChEBI" id="CHEBI:16480"/>
        <dbReference type="ChEBI" id="CHEBI:55376"/>
        <dbReference type="ChEBI" id="CHEBI:60344"/>
    </reaction>
    <physiologicalReaction direction="right-to-left" evidence="1">
        <dbReference type="Rhea" id="RHEA:77713"/>
    </physiologicalReaction>
</comment>
<comment type="catalytic activity">
    <reaction evidence="1">
        <text>H2O2 + AH2 = A + 2 H2O</text>
        <dbReference type="Rhea" id="RHEA:30275"/>
        <dbReference type="ChEBI" id="CHEBI:13193"/>
        <dbReference type="ChEBI" id="CHEBI:15377"/>
        <dbReference type="ChEBI" id="CHEBI:16240"/>
        <dbReference type="ChEBI" id="CHEBI:17499"/>
    </reaction>
</comment>
<comment type="subunit">
    <text evidence="2">Monomeric.</text>
</comment>
<comment type="subcellular location">
    <subcellularLocation>
        <location evidence="1">Cytoplasm</location>
        <location evidence="1">Sarcoplasm</location>
    </subcellularLocation>
</comment>
<comment type="similarity">
    <text evidence="7">Belongs to the globin family.</text>
</comment>
<keyword id="KW-0963">Cytoplasm</keyword>
<keyword id="KW-0349">Heme</keyword>
<keyword id="KW-0408">Iron</keyword>
<keyword id="KW-0479">Metal-binding</keyword>
<keyword id="KW-0514">Muscle protein</keyword>
<keyword id="KW-0560">Oxidoreductase</keyword>
<keyword id="KW-0561">Oxygen transport</keyword>
<keyword id="KW-0597">Phosphoprotein</keyword>
<keyword id="KW-0813">Transport</keyword>